<dbReference type="EMBL" id="AC002336">
    <property type="protein sequence ID" value="AAB87592.1"/>
    <property type="status" value="ALT_SEQ"/>
    <property type="molecule type" value="Genomic_DNA"/>
</dbReference>
<dbReference type="EMBL" id="AC007020">
    <property type="protein sequence ID" value="AAM15350.1"/>
    <property type="status" value="ALT_SEQ"/>
    <property type="molecule type" value="Genomic_DNA"/>
</dbReference>
<dbReference type="EMBL" id="CP002685">
    <property type="status" value="NOT_ANNOTATED_CDS"/>
    <property type="molecule type" value="Genomic_DNA"/>
</dbReference>
<dbReference type="PIR" id="E84829">
    <property type="entry name" value="E84829"/>
</dbReference>
<dbReference type="SMR" id="O22891"/>
<dbReference type="FunCoup" id="O22891">
    <property type="interactions" value="104"/>
</dbReference>
<dbReference type="PaxDb" id="3702-AT2G40440.1"/>
<dbReference type="Araport" id="AT2G40440"/>
<dbReference type="TAIR" id="AT2G40440"/>
<dbReference type="eggNOG" id="KOG1987">
    <property type="taxonomic scope" value="Eukaryota"/>
</dbReference>
<dbReference type="InParanoid" id="O22891"/>
<dbReference type="PhylomeDB" id="O22891"/>
<dbReference type="UniPathway" id="UPA00143"/>
<dbReference type="PRO" id="PR:O22891"/>
<dbReference type="Proteomes" id="UP000006548">
    <property type="component" value="Chromosome 2"/>
</dbReference>
<dbReference type="ExpressionAtlas" id="O22891">
    <property type="expression patterns" value="baseline and differential"/>
</dbReference>
<dbReference type="GO" id="GO:0016567">
    <property type="term" value="P:protein ubiquitination"/>
    <property type="evidence" value="ECO:0007669"/>
    <property type="project" value="UniProtKB-UniPathway"/>
</dbReference>
<dbReference type="CDD" id="cd18186">
    <property type="entry name" value="BTB_POZ_ZBTB_KLHL-like"/>
    <property type="match status" value="1"/>
</dbReference>
<dbReference type="Gene3D" id="3.30.710.10">
    <property type="entry name" value="Potassium Channel Kv1.1, Chain A"/>
    <property type="match status" value="1"/>
</dbReference>
<dbReference type="InterPro" id="IPR044784">
    <property type="entry name" value="At1g01640-like"/>
</dbReference>
<dbReference type="InterPro" id="IPR000210">
    <property type="entry name" value="BTB/POZ_dom"/>
</dbReference>
<dbReference type="InterPro" id="IPR011333">
    <property type="entry name" value="SKP1/BTB/POZ_sf"/>
</dbReference>
<dbReference type="PANTHER" id="PTHR47274:SF3">
    <property type="entry name" value="BTB DOMAIN-CONTAINING PROTEIN"/>
    <property type="match status" value="1"/>
</dbReference>
<dbReference type="PANTHER" id="PTHR47274">
    <property type="entry name" value="BTB/POZ DOMAIN CONTAINING PROTEIN, EXPRESSED-RELATED"/>
    <property type="match status" value="1"/>
</dbReference>
<dbReference type="Pfam" id="PF00651">
    <property type="entry name" value="BTB"/>
    <property type="match status" value="1"/>
</dbReference>
<dbReference type="SMART" id="SM00225">
    <property type="entry name" value="BTB"/>
    <property type="match status" value="1"/>
</dbReference>
<dbReference type="SUPFAM" id="SSF54695">
    <property type="entry name" value="POZ domain"/>
    <property type="match status" value="1"/>
</dbReference>
<dbReference type="PROSITE" id="PS50097">
    <property type="entry name" value="BTB"/>
    <property type="match status" value="1"/>
</dbReference>
<comment type="function">
    <text evidence="1">May act as a substrate-specific adapter of an E3 ubiquitin-protein ligase complex (CUL3-RBX1-BTB) which mediates the ubiquitination and subsequent proteasomal degradation of target proteins.</text>
</comment>
<comment type="pathway">
    <text>Protein modification; protein ubiquitination.</text>
</comment>
<comment type="domain">
    <text evidence="3">The BTB/POZ domain mediates the interaction with some component of ubiquitin ligase complexes.</text>
</comment>
<comment type="sequence caution" evidence="4">
    <conflict type="erroneous gene model prediction">
        <sequence resource="EMBL-CDS" id="AAB87592"/>
    </conflict>
</comment>
<comment type="sequence caution" evidence="4">
    <conflict type="erroneous gene model prediction">
        <sequence resource="EMBL-CDS" id="AAM15350"/>
    </conflict>
</comment>
<evidence type="ECO:0000250" key="1"/>
<evidence type="ECO:0000255" key="2">
    <source>
        <dbReference type="PROSITE-ProRule" id="PRU00037"/>
    </source>
</evidence>
<evidence type="ECO:0000269" key="3">
    <source>
    </source>
</evidence>
<evidence type="ECO:0000305" key="4"/>
<reference key="1">
    <citation type="journal article" date="1999" name="Nature">
        <title>Sequence and analysis of chromosome 2 of the plant Arabidopsis thaliana.</title>
        <authorList>
            <person name="Lin X."/>
            <person name="Kaul S."/>
            <person name="Rounsley S.D."/>
            <person name="Shea T.P."/>
            <person name="Benito M.-I."/>
            <person name="Town C.D."/>
            <person name="Fujii C.Y."/>
            <person name="Mason T.M."/>
            <person name="Bowman C.L."/>
            <person name="Barnstead M.E."/>
            <person name="Feldblyum T.V."/>
            <person name="Buell C.R."/>
            <person name="Ketchum K.A."/>
            <person name="Lee J.J."/>
            <person name="Ronning C.M."/>
            <person name="Koo H.L."/>
            <person name="Moffat K.S."/>
            <person name="Cronin L.A."/>
            <person name="Shen M."/>
            <person name="Pai G."/>
            <person name="Van Aken S."/>
            <person name="Umayam L."/>
            <person name="Tallon L.J."/>
            <person name="Gill J.E."/>
            <person name="Adams M.D."/>
            <person name="Carrera A.J."/>
            <person name="Creasy T.H."/>
            <person name="Goodman H.M."/>
            <person name="Somerville C.R."/>
            <person name="Copenhaver G.P."/>
            <person name="Preuss D."/>
            <person name="Nierman W.C."/>
            <person name="White O."/>
            <person name="Eisen J.A."/>
            <person name="Salzberg S.L."/>
            <person name="Fraser C.M."/>
            <person name="Venter J.C."/>
        </authorList>
    </citation>
    <scope>NUCLEOTIDE SEQUENCE [LARGE SCALE GENOMIC DNA]</scope>
    <source>
        <strain>cv. Columbia</strain>
    </source>
</reference>
<reference key="2">
    <citation type="journal article" date="2017" name="Plant J.">
        <title>Araport11: a complete reannotation of the Arabidopsis thaliana reference genome.</title>
        <authorList>
            <person name="Cheng C.Y."/>
            <person name="Krishnakumar V."/>
            <person name="Chan A.P."/>
            <person name="Thibaud-Nissen F."/>
            <person name="Schobel S."/>
            <person name="Town C.D."/>
        </authorList>
    </citation>
    <scope>GENOME REANNOTATION</scope>
    <source>
        <strain>cv. Columbia</strain>
    </source>
</reference>
<reference key="3">
    <citation type="journal article" date="2005" name="J. Biol. Chem.">
        <title>Cullins 3a and 3b assemble with members of the broad complex/tramtrack/bric-a-brac (BTB) protein family to form essential ubiquitin-protein ligases (E3s) in Arabidopsis.</title>
        <authorList>
            <person name="Gingerich D.J."/>
            <person name="Gagne J.M."/>
            <person name="Salter D.W."/>
            <person name="Hellmann H."/>
            <person name="Estelle M."/>
            <person name="Ma L."/>
            <person name="Vierstra R.D."/>
        </authorList>
    </citation>
    <scope>DOMAIN BTB</scope>
</reference>
<gene>
    <name type="ordered locus">At2g40440</name>
    <name type="ORF">T2P4.21</name>
    <name type="ORF">T3G21</name>
</gene>
<keyword id="KW-1185">Reference proteome</keyword>
<keyword id="KW-0833">Ubl conjugation pathway</keyword>
<name>Y2044_ARATH</name>
<organism>
    <name type="scientific">Arabidopsis thaliana</name>
    <name type="common">Mouse-ear cress</name>
    <dbReference type="NCBI Taxonomy" id="3702"/>
    <lineage>
        <taxon>Eukaryota</taxon>
        <taxon>Viridiplantae</taxon>
        <taxon>Streptophyta</taxon>
        <taxon>Embryophyta</taxon>
        <taxon>Tracheophyta</taxon>
        <taxon>Spermatophyta</taxon>
        <taxon>Magnoliopsida</taxon>
        <taxon>eudicotyledons</taxon>
        <taxon>Gunneridae</taxon>
        <taxon>Pentapetalae</taxon>
        <taxon>rosids</taxon>
        <taxon>malvids</taxon>
        <taxon>Brassicales</taxon>
        <taxon>Brassicaceae</taxon>
        <taxon>Camelineae</taxon>
        <taxon>Arabidopsis</taxon>
    </lineage>
</organism>
<proteinExistence type="inferred from homology"/>
<protein>
    <recommendedName>
        <fullName>Putative BTB/POZ domain-containing protein At2g40440</fullName>
    </recommendedName>
</protein>
<accession>O22891</accession>
<accession>F4IHZ1</accession>
<sequence>MATETNKELFVGGFAKILKEQRQVDVRLKAGDSGDEGASTSAHKLVLSARSEVFKKMLESDEIKASAQLETITLCEMKHEELEAFIEFIYSDGSMLSAKEKQHVRSLYIAGDKYEIPHLRDLCRIELISSLKSSNALDILELAQIPFDKALHDSAFFFFFFFFFG</sequence>
<feature type="chain" id="PRO_0000405998" description="Putative BTB/POZ domain-containing protein At2g40440">
    <location>
        <begin position="1"/>
        <end position="165"/>
    </location>
</feature>
<feature type="domain" description="BTB" evidence="2">
    <location>
        <begin position="24"/>
        <end position="98"/>
    </location>
</feature>